<keyword id="KW-1015">Disulfide bond</keyword>
<keyword id="KW-0481">Metalloenzyme inhibitor</keyword>
<keyword id="KW-0483">Metalloprotease inhibitor</keyword>
<keyword id="KW-0646">Protease inhibitor</keyword>
<keyword id="KW-0964">Secreted</keyword>
<keyword id="KW-0732">Signal</keyword>
<comment type="function">
    <text evidence="3 4">Binds and inhibits MMP-2 and shows an activity in inhibiting migration and invasion of neuroblastoma. Intact C-terminus is crucial to the activities of this protein (PubMed:19706303).</text>
</comment>
<comment type="subcellular location">
    <subcellularLocation>
        <location evidence="1">Secreted</location>
    </subcellularLocation>
</comment>
<comment type="tissue specificity">
    <text>Expressed by the venom gland.</text>
</comment>
<comment type="miscellaneous">
    <text evidence="6">Negative results: does not inhibit chymotrypsin or trypsin.</text>
</comment>
<comment type="similarity">
    <text evidence="5">Belongs to the venom Kunitz-type family.</text>
</comment>
<protein>
    <recommendedName>
        <fullName>Kunitz-type serine protease inhibitor PILP-3</fullName>
    </recommendedName>
    <alternativeName>
        <fullName>Protease inhibitor-like protein 3</fullName>
    </alternativeName>
</protein>
<evidence type="ECO:0000250" key="1"/>
<evidence type="ECO:0000255" key="2">
    <source>
        <dbReference type="PROSITE-ProRule" id="PRU00031"/>
    </source>
</evidence>
<evidence type="ECO:0000269" key="3">
    <source>
    </source>
</evidence>
<evidence type="ECO:0000269" key="4">
    <source>
    </source>
</evidence>
<evidence type="ECO:0000305" key="5"/>
<evidence type="ECO:0000305" key="6">
    <source>
    </source>
</evidence>
<proteinExistence type="inferred from homology"/>
<accession>B4ESA4</accession>
<dbReference type="EMBL" id="AM939783">
    <property type="protein sequence ID" value="CAP74383.1"/>
    <property type="molecule type" value="Genomic_DNA"/>
</dbReference>
<dbReference type="SMR" id="B4ESA4"/>
<dbReference type="MEROPS" id="I02.031"/>
<dbReference type="GO" id="GO:0005615">
    <property type="term" value="C:extracellular space"/>
    <property type="evidence" value="ECO:0007669"/>
    <property type="project" value="TreeGrafter"/>
</dbReference>
<dbReference type="GO" id="GO:0004867">
    <property type="term" value="F:serine-type endopeptidase inhibitor activity"/>
    <property type="evidence" value="ECO:0007669"/>
    <property type="project" value="InterPro"/>
</dbReference>
<dbReference type="CDD" id="cd22594">
    <property type="entry name" value="Kunitz_textilinin-like"/>
    <property type="match status" value="1"/>
</dbReference>
<dbReference type="Gene3D" id="4.10.410.10">
    <property type="entry name" value="Pancreatic trypsin inhibitor Kunitz domain"/>
    <property type="match status" value="1"/>
</dbReference>
<dbReference type="InterPro" id="IPR002223">
    <property type="entry name" value="Kunitz_BPTI"/>
</dbReference>
<dbReference type="InterPro" id="IPR036880">
    <property type="entry name" value="Kunitz_BPTI_sf"/>
</dbReference>
<dbReference type="InterPro" id="IPR020901">
    <property type="entry name" value="Prtase_inh_Kunz-CS"/>
</dbReference>
<dbReference type="InterPro" id="IPR050098">
    <property type="entry name" value="TFPI/VKTCI-like"/>
</dbReference>
<dbReference type="PANTHER" id="PTHR10083:SF374">
    <property type="entry name" value="BPTI_KUNITZ INHIBITOR DOMAIN-CONTAINING PROTEIN"/>
    <property type="match status" value="1"/>
</dbReference>
<dbReference type="PANTHER" id="PTHR10083">
    <property type="entry name" value="KUNITZ-TYPE PROTEASE INHIBITOR-RELATED"/>
    <property type="match status" value="1"/>
</dbReference>
<dbReference type="Pfam" id="PF00014">
    <property type="entry name" value="Kunitz_BPTI"/>
    <property type="match status" value="1"/>
</dbReference>
<dbReference type="PRINTS" id="PR00759">
    <property type="entry name" value="BASICPTASE"/>
</dbReference>
<dbReference type="SMART" id="SM00131">
    <property type="entry name" value="KU"/>
    <property type="match status" value="1"/>
</dbReference>
<dbReference type="SUPFAM" id="SSF57362">
    <property type="entry name" value="BPTI-like"/>
    <property type="match status" value="1"/>
</dbReference>
<dbReference type="PROSITE" id="PS00280">
    <property type="entry name" value="BPTI_KUNITZ_1"/>
    <property type="match status" value="1"/>
</dbReference>
<dbReference type="PROSITE" id="PS50279">
    <property type="entry name" value="BPTI_KUNITZ_2"/>
    <property type="match status" value="1"/>
</dbReference>
<name>VKT3L_BUNMU</name>
<organism>
    <name type="scientific">Bungarus multicinctus</name>
    <name type="common">Many-banded krait</name>
    <dbReference type="NCBI Taxonomy" id="8616"/>
    <lineage>
        <taxon>Eukaryota</taxon>
        <taxon>Metazoa</taxon>
        <taxon>Chordata</taxon>
        <taxon>Craniata</taxon>
        <taxon>Vertebrata</taxon>
        <taxon>Euteleostomi</taxon>
        <taxon>Lepidosauria</taxon>
        <taxon>Squamata</taxon>
        <taxon>Bifurcata</taxon>
        <taxon>Unidentata</taxon>
        <taxon>Episquamata</taxon>
        <taxon>Toxicofera</taxon>
        <taxon>Serpentes</taxon>
        <taxon>Colubroidea</taxon>
        <taxon>Elapidae</taxon>
        <taxon>Bungarinae</taxon>
        <taxon>Bungarus</taxon>
    </lineage>
</organism>
<feature type="signal peptide" evidence="1">
    <location>
        <begin position="1"/>
        <end position="24"/>
    </location>
</feature>
<feature type="chain" id="PRO_5000388069" description="Kunitz-type serine protease inhibitor PILP-3">
    <location>
        <begin position="25"/>
        <end position="83"/>
    </location>
</feature>
<feature type="domain" description="BPTI/Kunitz inhibitor" evidence="2">
    <location>
        <begin position="31"/>
        <end position="81"/>
    </location>
</feature>
<feature type="site" description="Reactive bond for chymotrypsin" evidence="1">
    <location>
        <begin position="41"/>
        <end position="42"/>
    </location>
</feature>
<feature type="disulfide bond" evidence="2">
    <location>
        <begin position="31"/>
        <end position="81"/>
    </location>
</feature>
<feature type="disulfide bond" evidence="2">
    <location>
        <begin position="40"/>
        <end position="64"/>
    </location>
</feature>
<feature type="disulfide bond" evidence="2">
    <location>
        <begin position="56"/>
        <end position="77"/>
    </location>
</feature>
<reference key="1">
    <citation type="journal article" date="2008" name="Toxicon">
        <title>Genomic DNAs encoding Bungarus multicinctis protease inhibitor-like proteins.</title>
        <authorList>
            <person name="Chang L.-S."/>
            <person name="Wang J.-J."/>
            <person name="Cheng Y.-C."/>
            <person name="Chou W.-M."/>
        </authorList>
    </citation>
    <scope>NUCLEOTIDE SEQUENCE [GENOMIC DNA]</scope>
    <scope>FUNCTION</scope>
    <source>
        <tissue>Liver</tissue>
    </source>
</reference>
<reference key="2">
    <citation type="journal article" date="2010" name="Toxicon">
        <title>Structure-function studies on inhibitory activity of Bungarus multicinctus protease inhibitor-like protein on matrix metalloprotease-2, and invasion and migration of human neuroblastoma SK-N-SH cells.</title>
        <authorList>
            <person name="Chou W.M."/>
            <person name="Liu W.H."/>
            <person name="Chen K.C."/>
            <person name="Chang L.S."/>
        </authorList>
    </citation>
    <scope>FUNCTION</scope>
</reference>
<sequence length="83" mass="9227">MSSGGLLLLLGLLTLWAELTPVSSRKRHQFCNVPPEPGRCNANVRAFYYNPRLRKCIEFSYGGCGGNANNFKSRGECKRTCAE</sequence>